<protein>
    <recommendedName>
        <fullName evidence="1">ATP-dependent Clp protease proteolytic subunit</fullName>
        <ecNumber evidence="1">3.4.21.92</ecNumber>
    </recommendedName>
    <alternativeName>
        <fullName evidence="1">Endopeptidase Clp</fullName>
    </alternativeName>
</protein>
<keyword id="KW-0963">Cytoplasm</keyword>
<keyword id="KW-0378">Hydrolase</keyword>
<keyword id="KW-0645">Protease</keyword>
<keyword id="KW-0720">Serine protease</keyword>
<name>CLPP_CERS1</name>
<dbReference type="EC" id="3.4.21.92" evidence="1"/>
<dbReference type="EMBL" id="CP000577">
    <property type="protein sequence ID" value="ABN76937.1"/>
    <property type="molecule type" value="Genomic_DNA"/>
</dbReference>
<dbReference type="RefSeq" id="WP_002720342.1">
    <property type="nucleotide sequence ID" value="NC_009049.1"/>
</dbReference>
<dbReference type="SMR" id="A3PKS1"/>
<dbReference type="MEROPS" id="S14.001"/>
<dbReference type="KEGG" id="rsh:Rsph17029_1830"/>
<dbReference type="HOGENOM" id="CLU_058707_3_2_5"/>
<dbReference type="GO" id="GO:0005737">
    <property type="term" value="C:cytoplasm"/>
    <property type="evidence" value="ECO:0007669"/>
    <property type="project" value="UniProtKB-SubCell"/>
</dbReference>
<dbReference type="GO" id="GO:0009368">
    <property type="term" value="C:endopeptidase Clp complex"/>
    <property type="evidence" value="ECO:0007669"/>
    <property type="project" value="TreeGrafter"/>
</dbReference>
<dbReference type="GO" id="GO:0004176">
    <property type="term" value="F:ATP-dependent peptidase activity"/>
    <property type="evidence" value="ECO:0007669"/>
    <property type="project" value="InterPro"/>
</dbReference>
<dbReference type="GO" id="GO:0051117">
    <property type="term" value="F:ATPase binding"/>
    <property type="evidence" value="ECO:0007669"/>
    <property type="project" value="TreeGrafter"/>
</dbReference>
<dbReference type="GO" id="GO:0004252">
    <property type="term" value="F:serine-type endopeptidase activity"/>
    <property type="evidence" value="ECO:0007669"/>
    <property type="project" value="UniProtKB-UniRule"/>
</dbReference>
<dbReference type="GO" id="GO:0006515">
    <property type="term" value="P:protein quality control for misfolded or incompletely synthesized proteins"/>
    <property type="evidence" value="ECO:0007669"/>
    <property type="project" value="TreeGrafter"/>
</dbReference>
<dbReference type="CDD" id="cd07017">
    <property type="entry name" value="S14_ClpP_2"/>
    <property type="match status" value="1"/>
</dbReference>
<dbReference type="FunFam" id="3.90.226.10:FF:000001">
    <property type="entry name" value="ATP-dependent Clp protease proteolytic subunit"/>
    <property type="match status" value="1"/>
</dbReference>
<dbReference type="Gene3D" id="3.90.226.10">
    <property type="entry name" value="2-enoyl-CoA Hydratase, Chain A, domain 1"/>
    <property type="match status" value="1"/>
</dbReference>
<dbReference type="HAMAP" id="MF_00444">
    <property type="entry name" value="ClpP"/>
    <property type="match status" value="1"/>
</dbReference>
<dbReference type="InterPro" id="IPR001907">
    <property type="entry name" value="ClpP"/>
</dbReference>
<dbReference type="InterPro" id="IPR029045">
    <property type="entry name" value="ClpP/crotonase-like_dom_sf"/>
</dbReference>
<dbReference type="InterPro" id="IPR023562">
    <property type="entry name" value="ClpP/TepA"/>
</dbReference>
<dbReference type="InterPro" id="IPR033135">
    <property type="entry name" value="ClpP_His_AS"/>
</dbReference>
<dbReference type="InterPro" id="IPR018215">
    <property type="entry name" value="ClpP_Ser_AS"/>
</dbReference>
<dbReference type="NCBIfam" id="NF001368">
    <property type="entry name" value="PRK00277.1"/>
    <property type="match status" value="1"/>
</dbReference>
<dbReference type="NCBIfam" id="NF009205">
    <property type="entry name" value="PRK12553.1"/>
    <property type="match status" value="1"/>
</dbReference>
<dbReference type="PANTHER" id="PTHR10381">
    <property type="entry name" value="ATP-DEPENDENT CLP PROTEASE PROTEOLYTIC SUBUNIT"/>
    <property type="match status" value="1"/>
</dbReference>
<dbReference type="PANTHER" id="PTHR10381:SF70">
    <property type="entry name" value="ATP-DEPENDENT CLP PROTEASE PROTEOLYTIC SUBUNIT"/>
    <property type="match status" value="1"/>
</dbReference>
<dbReference type="Pfam" id="PF00574">
    <property type="entry name" value="CLP_protease"/>
    <property type="match status" value="1"/>
</dbReference>
<dbReference type="PRINTS" id="PR00127">
    <property type="entry name" value="CLPPROTEASEP"/>
</dbReference>
<dbReference type="SUPFAM" id="SSF52096">
    <property type="entry name" value="ClpP/crotonase"/>
    <property type="match status" value="1"/>
</dbReference>
<dbReference type="PROSITE" id="PS00382">
    <property type="entry name" value="CLP_PROTEASE_HIS"/>
    <property type="match status" value="1"/>
</dbReference>
<dbReference type="PROSITE" id="PS00381">
    <property type="entry name" value="CLP_PROTEASE_SER"/>
    <property type="match status" value="1"/>
</dbReference>
<accession>A3PKS1</accession>
<sequence>MKDPIDLYMNTLVPMVVEQTSRGERAYDIYSRMLKERIIFLSGPVHDGMSSLICAQLLFLEAENPSKEIAMYINSPGGVVTSGLSIYDTMQYIRPKVSTLVIGQAASMGSLLLTAGEKGMRFSLPNSRVMVHQPSGGYQGQATDIMIHARETEKLKRRLNEIYVRHTGQDLETVEAALERDNFMSAEDAKAWGLIDEILESRNRPDDTAK</sequence>
<gene>
    <name evidence="1" type="primary">clpP</name>
    <name type="ordered locus">Rsph17029_1830</name>
</gene>
<comment type="function">
    <text evidence="1">Cleaves peptides in various proteins in a process that requires ATP hydrolysis. Has a chymotrypsin-like activity. Plays a major role in the degradation of misfolded proteins.</text>
</comment>
<comment type="catalytic activity">
    <reaction evidence="1">
        <text>Hydrolysis of proteins to small peptides in the presence of ATP and magnesium. alpha-casein is the usual test substrate. In the absence of ATP, only oligopeptides shorter than five residues are hydrolyzed (such as succinyl-Leu-Tyr-|-NHMec, and Leu-Tyr-Leu-|-Tyr-Trp, in which cleavage of the -Tyr-|-Leu- and -Tyr-|-Trp bonds also occurs).</text>
        <dbReference type="EC" id="3.4.21.92"/>
    </reaction>
</comment>
<comment type="subunit">
    <text evidence="1">Fourteen ClpP subunits assemble into 2 heptameric rings which stack back to back to give a disk-like structure with a central cavity, resembling the structure of eukaryotic proteasomes.</text>
</comment>
<comment type="subcellular location">
    <subcellularLocation>
        <location evidence="1">Cytoplasm</location>
    </subcellularLocation>
</comment>
<comment type="similarity">
    <text evidence="1">Belongs to the peptidase S14 family.</text>
</comment>
<proteinExistence type="inferred from homology"/>
<feature type="chain" id="PRO_1000026119" description="ATP-dependent Clp protease proteolytic subunit">
    <location>
        <begin position="1"/>
        <end position="210"/>
    </location>
</feature>
<feature type="active site" description="Nucleophile" evidence="1">
    <location>
        <position position="107"/>
    </location>
</feature>
<feature type="active site" evidence="1">
    <location>
        <position position="132"/>
    </location>
</feature>
<reference key="1">
    <citation type="submission" date="2007-02" db="EMBL/GenBank/DDBJ databases">
        <title>Complete sequence of chromosome 1 of Rhodobacter sphaeroides ATCC 17029.</title>
        <authorList>
            <person name="Copeland A."/>
            <person name="Lucas S."/>
            <person name="Lapidus A."/>
            <person name="Barry K."/>
            <person name="Detter J.C."/>
            <person name="Glavina del Rio T."/>
            <person name="Hammon N."/>
            <person name="Israni S."/>
            <person name="Dalin E."/>
            <person name="Tice H."/>
            <person name="Pitluck S."/>
            <person name="Kiss H."/>
            <person name="Brettin T."/>
            <person name="Bruce D."/>
            <person name="Han C."/>
            <person name="Tapia R."/>
            <person name="Gilna P."/>
            <person name="Schmutz J."/>
            <person name="Larimer F."/>
            <person name="Land M."/>
            <person name="Hauser L."/>
            <person name="Kyrpides N."/>
            <person name="Mikhailova N."/>
            <person name="Richardson P."/>
            <person name="Mackenzie C."/>
            <person name="Choudhary M."/>
            <person name="Donohue T.J."/>
            <person name="Kaplan S."/>
        </authorList>
    </citation>
    <scope>NUCLEOTIDE SEQUENCE [LARGE SCALE GENOMIC DNA]</scope>
    <source>
        <strain>ATCC 17029 / ATH 2.4.9</strain>
    </source>
</reference>
<evidence type="ECO:0000255" key="1">
    <source>
        <dbReference type="HAMAP-Rule" id="MF_00444"/>
    </source>
</evidence>
<organism>
    <name type="scientific">Cereibacter sphaeroides (strain ATCC 17029 / ATH 2.4.9)</name>
    <name type="common">Rhodobacter sphaeroides</name>
    <dbReference type="NCBI Taxonomy" id="349101"/>
    <lineage>
        <taxon>Bacteria</taxon>
        <taxon>Pseudomonadati</taxon>
        <taxon>Pseudomonadota</taxon>
        <taxon>Alphaproteobacteria</taxon>
        <taxon>Rhodobacterales</taxon>
        <taxon>Paracoccaceae</taxon>
        <taxon>Cereibacter</taxon>
    </lineage>
</organism>